<sequence length="118" mass="12544">MTVQNEPSAKTHGVILTEAAAAKAKSLLDQEGRDDLALRIAVQPGGCAGLRYNLFFDDRTLDGDQTAEFGGVRLIVDRMSAPYVEGASIDFVDTIEKQGFTIDNPNATGSCACGDSFN</sequence>
<gene>
    <name type="ordered locus">Rv2204c</name>
    <name type="ORF">MTCY190.15c</name>
</gene>
<evidence type="ECO:0000305" key="1"/>
<evidence type="ECO:0007744" key="2">
    <source>
    </source>
</evidence>
<accession>P9WMN5</accession>
<accession>L0TBT4</accession>
<accession>P0A5A9</accession>
<accession>Q10393</accession>
<feature type="initiator methionine" description="Removed" evidence="2">
    <location>
        <position position="1"/>
    </location>
</feature>
<feature type="chain" id="PRO_0000077019" description="Protein Rv2204c">
    <location>
        <begin position="2"/>
        <end position="118"/>
    </location>
</feature>
<feature type="modified residue" description="N-acetylthreonine" evidence="2">
    <location>
        <position position="2"/>
    </location>
</feature>
<organism>
    <name type="scientific">Mycobacterium tuberculosis (strain ATCC 25618 / H37Rv)</name>
    <dbReference type="NCBI Taxonomy" id="83332"/>
    <lineage>
        <taxon>Bacteria</taxon>
        <taxon>Bacillati</taxon>
        <taxon>Actinomycetota</taxon>
        <taxon>Actinomycetes</taxon>
        <taxon>Mycobacteriales</taxon>
        <taxon>Mycobacteriaceae</taxon>
        <taxon>Mycobacterium</taxon>
        <taxon>Mycobacterium tuberculosis complex</taxon>
    </lineage>
</organism>
<keyword id="KW-0007">Acetylation</keyword>
<keyword id="KW-1185">Reference proteome</keyword>
<proteinExistence type="evidence at protein level"/>
<reference key="1">
    <citation type="journal article" date="1998" name="Nature">
        <title>Deciphering the biology of Mycobacterium tuberculosis from the complete genome sequence.</title>
        <authorList>
            <person name="Cole S.T."/>
            <person name="Brosch R."/>
            <person name="Parkhill J."/>
            <person name="Garnier T."/>
            <person name="Churcher C.M."/>
            <person name="Harris D.E."/>
            <person name="Gordon S.V."/>
            <person name="Eiglmeier K."/>
            <person name="Gas S."/>
            <person name="Barry C.E. III"/>
            <person name="Tekaia F."/>
            <person name="Badcock K."/>
            <person name="Basham D."/>
            <person name="Brown D."/>
            <person name="Chillingworth T."/>
            <person name="Connor R."/>
            <person name="Davies R.M."/>
            <person name="Devlin K."/>
            <person name="Feltwell T."/>
            <person name="Gentles S."/>
            <person name="Hamlin N."/>
            <person name="Holroyd S."/>
            <person name="Hornsby T."/>
            <person name="Jagels K."/>
            <person name="Krogh A."/>
            <person name="McLean J."/>
            <person name="Moule S."/>
            <person name="Murphy L.D."/>
            <person name="Oliver S."/>
            <person name="Osborne J."/>
            <person name="Quail M.A."/>
            <person name="Rajandream M.A."/>
            <person name="Rogers J."/>
            <person name="Rutter S."/>
            <person name="Seeger K."/>
            <person name="Skelton S."/>
            <person name="Squares S."/>
            <person name="Squares R."/>
            <person name="Sulston J.E."/>
            <person name="Taylor K."/>
            <person name="Whitehead S."/>
            <person name="Barrell B.G."/>
        </authorList>
    </citation>
    <scope>NUCLEOTIDE SEQUENCE [LARGE SCALE GENOMIC DNA]</scope>
    <source>
        <strain>ATCC 25618 / H37Rv</strain>
    </source>
</reference>
<reference key="2">
    <citation type="journal article" date="2001" name="Proteomics">
        <title>Identification of acidic, low molecular mass proteins of Mycobacterium tuberculosis strain H37Rv by matrix-assisted laser desorption/ionization and electrospray ionization mass spectrometry.</title>
        <authorList>
            <person name="Mattow J."/>
            <person name="Jungblut P.R."/>
            <person name="Mueller E.-C."/>
            <person name="Kaufmann S.H.E."/>
        </authorList>
    </citation>
    <scope>IDENTIFICATION BY MASS SPECTROMETRY</scope>
    <source>
        <strain>ATCC 25618 / H37Rv</strain>
    </source>
</reference>
<reference key="3">
    <citation type="journal article" date="2011" name="Mol. Cell. Proteomics">
        <title>Proteogenomic analysis of Mycobacterium tuberculosis by high resolution mass spectrometry.</title>
        <authorList>
            <person name="Kelkar D.S."/>
            <person name="Kumar D."/>
            <person name="Kumar P."/>
            <person name="Balakrishnan L."/>
            <person name="Muthusamy B."/>
            <person name="Yadav A.K."/>
            <person name="Shrivastava P."/>
            <person name="Marimuthu A."/>
            <person name="Anand S."/>
            <person name="Sundaram H."/>
            <person name="Kingsbury R."/>
            <person name="Harsha H.C."/>
            <person name="Nair B."/>
            <person name="Prasad T.S."/>
            <person name="Chauhan D.S."/>
            <person name="Katoch K."/>
            <person name="Katoch V.M."/>
            <person name="Kumar P."/>
            <person name="Chaerkady R."/>
            <person name="Ramachandran S."/>
            <person name="Dash D."/>
            <person name="Pandey A."/>
        </authorList>
    </citation>
    <scope>ACETYLATION [LARGE SCALE ANALYSIS] AT THR-2</scope>
    <scope>CLEAVAGE OF INITIATOR METHIONINE [LARGE SCALE ANALYSIS]</scope>
    <scope>IDENTIFICATION BY MASS SPECTROMETRY [LARGE SCALE ANALYSIS]</scope>
    <source>
        <strain>ATCC 25618 / H37Rv</strain>
    </source>
</reference>
<name>Y2204_MYCTU</name>
<protein>
    <recommendedName>
        <fullName>Protein Rv2204c</fullName>
    </recommendedName>
</protein>
<dbReference type="EMBL" id="AL123456">
    <property type="protein sequence ID" value="CCP44981.1"/>
    <property type="molecule type" value="Genomic_DNA"/>
</dbReference>
<dbReference type="PIR" id="E70785">
    <property type="entry name" value="E70785"/>
</dbReference>
<dbReference type="RefSeq" id="NP_216720.1">
    <property type="nucleotide sequence ID" value="NC_000962.3"/>
</dbReference>
<dbReference type="RefSeq" id="WP_003411418.1">
    <property type="nucleotide sequence ID" value="NZ_NVQJ01000008.1"/>
</dbReference>
<dbReference type="SMR" id="P9WMN5"/>
<dbReference type="FunCoup" id="P9WMN5">
    <property type="interactions" value="282"/>
</dbReference>
<dbReference type="STRING" id="83332.Rv2204c"/>
<dbReference type="iPTMnet" id="P9WMN5"/>
<dbReference type="PaxDb" id="83332-Rv2204c"/>
<dbReference type="DNASU" id="888428"/>
<dbReference type="GeneID" id="888428"/>
<dbReference type="KEGG" id="mtu:Rv2204c"/>
<dbReference type="KEGG" id="mtv:RVBD_2204c"/>
<dbReference type="TubercuList" id="Rv2204c"/>
<dbReference type="eggNOG" id="COG0316">
    <property type="taxonomic scope" value="Bacteria"/>
</dbReference>
<dbReference type="InParanoid" id="P9WMN5"/>
<dbReference type="OrthoDB" id="9801228at2"/>
<dbReference type="PhylomeDB" id="P9WMN5"/>
<dbReference type="Proteomes" id="UP000001584">
    <property type="component" value="Chromosome"/>
</dbReference>
<dbReference type="GO" id="GO:0005886">
    <property type="term" value="C:plasma membrane"/>
    <property type="evidence" value="ECO:0007005"/>
    <property type="project" value="MTBBASE"/>
</dbReference>
<dbReference type="GO" id="GO:0051537">
    <property type="term" value="F:2 iron, 2 sulfur cluster binding"/>
    <property type="evidence" value="ECO:0000318"/>
    <property type="project" value="GO_Central"/>
</dbReference>
<dbReference type="GO" id="GO:0051539">
    <property type="term" value="F:4 iron, 4 sulfur cluster binding"/>
    <property type="evidence" value="ECO:0000318"/>
    <property type="project" value="GO_Central"/>
</dbReference>
<dbReference type="GO" id="GO:0005506">
    <property type="term" value="F:iron ion binding"/>
    <property type="evidence" value="ECO:0000318"/>
    <property type="project" value="GO_Central"/>
</dbReference>
<dbReference type="GO" id="GO:0016226">
    <property type="term" value="P:iron-sulfur cluster assembly"/>
    <property type="evidence" value="ECO:0000318"/>
    <property type="project" value="GO_Central"/>
</dbReference>
<dbReference type="FunFam" id="2.60.300.12:FF:000003">
    <property type="entry name" value="Iron-sulfur cluster insertion protein ErpA"/>
    <property type="match status" value="1"/>
</dbReference>
<dbReference type="Gene3D" id="2.60.300.12">
    <property type="entry name" value="HesB-like domain"/>
    <property type="match status" value="1"/>
</dbReference>
<dbReference type="InterPro" id="IPR000361">
    <property type="entry name" value="FeS_biogenesis"/>
</dbReference>
<dbReference type="InterPro" id="IPR016092">
    <property type="entry name" value="FeS_cluster_insertion"/>
</dbReference>
<dbReference type="InterPro" id="IPR017870">
    <property type="entry name" value="FeS_cluster_insertion_CS"/>
</dbReference>
<dbReference type="InterPro" id="IPR035903">
    <property type="entry name" value="HesB-like_dom_sf"/>
</dbReference>
<dbReference type="NCBIfam" id="TIGR00049">
    <property type="entry name" value="iron-sulfur cluster assembly accessory protein"/>
    <property type="match status" value="1"/>
</dbReference>
<dbReference type="PANTHER" id="PTHR43011">
    <property type="entry name" value="IRON-SULFUR CLUSTER ASSEMBLY 2 HOMOLOG, MITOCHONDRIAL"/>
    <property type="match status" value="1"/>
</dbReference>
<dbReference type="PANTHER" id="PTHR43011:SF1">
    <property type="entry name" value="IRON-SULFUR CLUSTER ASSEMBLY 2 HOMOLOG, MITOCHONDRIAL"/>
    <property type="match status" value="1"/>
</dbReference>
<dbReference type="Pfam" id="PF01521">
    <property type="entry name" value="Fe-S_biosyn"/>
    <property type="match status" value="1"/>
</dbReference>
<dbReference type="SUPFAM" id="SSF89360">
    <property type="entry name" value="HesB-like domain"/>
    <property type="match status" value="1"/>
</dbReference>
<dbReference type="PROSITE" id="PS01152">
    <property type="entry name" value="HESB"/>
    <property type="match status" value="1"/>
</dbReference>
<comment type="similarity">
    <text evidence="1">Belongs to the HesB/IscA family.</text>
</comment>